<name>SFSA_PYRFU</name>
<protein>
    <recommendedName>
        <fullName evidence="1">Sugar fermentation stimulation protein homolog</fullName>
    </recommendedName>
</protein>
<proteinExistence type="evidence at protein level"/>
<dbReference type="EMBL" id="AE009950">
    <property type="protein sequence ID" value="AAL81322.1"/>
    <property type="molecule type" value="Genomic_DNA"/>
</dbReference>
<dbReference type="RefSeq" id="WP_011012339.1">
    <property type="nucleotide sequence ID" value="NZ_CP023154.1"/>
</dbReference>
<dbReference type="PDB" id="4DA2">
    <property type="method" value="X-ray"/>
    <property type="resolution" value="1.80 A"/>
    <property type="chains" value="A/B=1-230"/>
</dbReference>
<dbReference type="PDB" id="4DAV">
    <property type="method" value="X-ray"/>
    <property type="resolution" value="2.20 A"/>
    <property type="chains" value="A/B=1-230"/>
</dbReference>
<dbReference type="PDBsum" id="4DA2"/>
<dbReference type="PDBsum" id="4DAV"/>
<dbReference type="SMR" id="Q8U1K8"/>
<dbReference type="STRING" id="186497.PF1198"/>
<dbReference type="PaxDb" id="186497-PF1198"/>
<dbReference type="GeneID" id="41713006"/>
<dbReference type="KEGG" id="pfu:PF1198"/>
<dbReference type="PATRIC" id="fig|186497.12.peg.1259"/>
<dbReference type="eggNOG" id="arCOG04115">
    <property type="taxonomic scope" value="Archaea"/>
</dbReference>
<dbReference type="HOGENOM" id="CLU_052299_1_0_2"/>
<dbReference type="OrthoDB" id="34139at2157"/>
<dbReference type="PhylomeDB" id="Q8U1K8"/>
<dbReference type="EvolutionaryTrace" id="Q8U1K8"/>
<dbReference type="Proteomes" id="UP000001013">
    <property type="component" value="Chromosome"/>
</dbReference>
<dbReference type="GO" id="GO:0003677">
    <property type="term" value="F:DNA binding"/>
    <property type="evidence" value="ECO:0007669"/>
    <property type="project" value="InterPro"/>
</dbReference>
<dbReference type="CDD" id="cd22358">
    <property type="entry name" value="SfsA-like_archaeal"/>
    <property type="match status" value="1"/>
</dbReference>
<dbReference type="Gene3D" id="2.40.50.580">
    <property type="match status" value="1"/>
</dbReference>
<dbReference type="Gene3D" id="3.40.1350.60">
    <property type="match status" value="1"/>
</dbReference>
<dbReference type="HAMAP" id="MF_00095">
    <property type="entry name" value="SfsA"/>
    <property type="match status" value="1"/>
</dbReference>
<dbReference type="InterPro" id="IPR005224">
    <property type="entry name" value="SfsA"/>
</dbReference>
<dbReference type="InterPro" id="IPR040452">
    <property type="entry name" value="SfsA_C"/>
</dbReference>
<dbReference type="InterPro" id="IPR041465">
    <property type="entry name" value="SfsA_N"/>
</dbReference>
<dbReference type="NCBIfam" id="TIGR00230">
    <property type="entry name" value="sfsA"/>
    <property type="match status" value="1"/>
</dbReference>
<dbReference type="PANTHER" id="PTHR30545">
    <property type="entry name" value="SUGAR FERMENTATION STIMULATION PROTEIN A"/>
    <property type="match status" value="1"/>
</dbReference>
<dbReference type="PANTHER" id="PTHR30545:SF2">
    <property type="entry name" value="SUGAR FERMENTATION STIMULATION PROTEIN A"/>
    <property type="match status" value="1"/>
</dbReference>
<dbReference type="Pfam" id="PF03749">
    <property type="entry name" value="SfsA"/>
    <property type="match status" value="1"/>
</dbReference>
<dbReference type="Pfam" id="PF17746">
    <property type="entry name" value="SfsA_N"/>
    <property type="match status" value="1"/>
</dbReference>
<reference key="1">
    <citation type="journal article" date="1999" name="Genetics">
        <title>Divergence of the hyperthermophilic archaea Pyrococcus furiosus and P. horikoshii inferred from complete genomic sequences.</title>
        <authorList>
            <person name="Maeder D.L."/>
            <person name="Weiss R.B."/>
            <person name="Dunn D.M."/>
            <person name="Cherry J.L."/>
            <person name="Gonzalez J.M."/>
            <person name="DiRuggiero J."/>
            <person name="Robb F.T."/>
        </authorList>
    </citation>
    <scope>NUCLEOTIDE SEQUENCE [LARGE SCALE GENOMIC DNA]</scope>
    <source>
        <strain>ATCC 43587 / DSM 3638 / JCM 8422 / Vc1</strain>
    </source>
</reference>
<evidence type="ECO:0000255" key="1">
    <source>
        <dbReference type="HAMAP-Rule" id="MF_00095"/>
    </source>
</evidence>
<evidence type="ECO:0007829" key="2">
    <source>
        <dbReference type="PDB" id="4DA2"/>
    </source>
</evidence>
<comment type="similarity">
    <text evidence="1">Belongs to the SfsA family.</text>
</comment>
<feature type="chain" id="PRO_0000152326" description="Sugar fermentation stimulation protein homolog">
    <location>
        <begin position="1"/>
        <end position="230"/>
    </location>
</feature>
<feature type="strand" evidence="2">
    <location>
        <begin position="1"/>
        <end position="5"/>
    </location>
</feature>
<feature type="strand" evidence="2">
    <location>
        <begin position="10"/>
        <end position="17"/>
    </location>
</feature>
<feature type="strand" evidence="2">
    <location>
        <begin position="19"/>
        <end position="27"/>
    </location>
</feature>
<feature type="strand" evidence="2">
    <location>
        <begin position="30"/>
        <end position="35"/>
    </location>
</feature>
<feature type="turn" evidence="2">
    <location>
        <begin position="43"/>
        <end position="45"/>
    </location>
</feature>
<feature type="strand" evidence="2">
    <location>
        <begin position="51"/>
        <end position="56"/>
    </location>
</feature>
<feature type="strand" evidence="2">
    <location>
        <begin position="59"/>
        <end position="61"/>
    </location>
</feature>
<feature type="strand" evidence="2">
    <location>
        <begin position="63"/>
        <end position="71"/>
    </location>
</feature>
<feature type="strand" evidence="2">
    <location>
        <begin position="74"/>
        <end position="77"/>
    </location>
</feature>
<feature type="helix" evidence="2">
    <location>
        <begin position="80"/>
        <end position="92"/>
    </location>
</feature>
<feature type="helix" evidence="2">
    <location>
        <begin position="97"/>
        <end position="99"/>
    </location>
</feature>
<feature type="strand" evidence="2">
    <location>
        <begin position="103"/>
        <end position="108"/>
    </location>
</feature>
<feature type="strand" evidence="2">
    <location>
        <begin position="117"/>
        <end position="121"/>
    </location>
</feature>
<feature type="strand" evidence="2">
    <location>
        <begin position="126"/>
        <end position="133"/>
    </location>
</feature>
<feature type="strand" evidence="2">
    <location>
        <begin position="136"/>
        <end position="138"/>
    </location>
</feature>
<feature type="strand" evidence="2">
    <location>
        <begin position="141"/>
        <end position="144"/>
    </location>
</feature>
<feature type="helix" evidence="2">
    <location>
        <begin position="150"/>
        <end position="164"/>
    </location>
</feature>
<feature type="strand" evidence="2">
    <location>
        <begin position="168"/>
        <end position="175"/>
    </location>
</feature>
<feature type="strand" evidence="2">
    <location>
        <begin position="177"/>
        <end position="179"/>
    </location>
</feature>
<feature type="strand" evidence="2">
    <location>
        <begin position="182"/>
        <end position="185"/>
    </location>
</feature>
<feature type="turn" evidence="2">
    <location>
        <begin position="187"/>
        <end position="189"/>
    </location>
</feature>
<feature type="helix" evidence="2">
    <location>
        <begin position="191"/>
        <end position="203"/>
    </location>
</feature>
<feature type="strand" evidence="2">
    <location>
        <begin position="206"/>
        <end position="214"/>
    </location>
</feature>
<feature type="strand" evidence="2">
    <location>
        <begin position="218"/>
        <end position="225"/>
    </location>
</feature>
<accession>Q8U1K8</accession>
<gene>
    <name evidence="1" type="primary">sfsA</name>
    <name type="ordered locus">PF1198</name>
</gene>
<sequence length="230" mass="26114">MKLMEVSPLFPCIFLRRVNRFVGLVRIKERIERALITNTGRLNEFMIPGRIGYCTPKAGGKTRYILLGFEDHGKIAIIDTRLQGKAFEKIIEKELLPELEGCRIIKREPRVGESRLDYLLECSKGEIFVETKSAVLREGEYAMYPDCPSVRGQRHIKELIKLARDGKRAMIVFIGALPNVSKFKPYKKGDPKIAELLKEALEAGVEIRALGLHMELSGEIIYRGELGVEI</sequence>
<keyword id="KW-0002">3D-structure</keyword>
<keyword id="KW-1185">Reference proteome</keyword>
<organism>
    <name type="scientific">Pyrococcus furiosus (strain ATCC 43587 / DSM 3638 / JCM 8422 / Vc1)</name>
    <dbReference type="NCBI Taxonomy" id="186497"/>
    <lineage>
        <taxon>Archaea</taxon>
        <taxon>Methanobacteriati</taxon>
        <taxon>Methanobacteriota</taxon>
        <taxon>Thermococci</taxon>
        <taxon>Thermococcales</taxon>
        <taxon>Thermococcaceae</taxon>
        <taxon>Pyrococcus</taxon>
    </lineage>
</organism>